<evidence type="ECO:0000255" key="1">
    <source>
        <dbReference type="HAMAP-Rule" id="MF_00558"/>
    </source>
</evidence>
<dbReference type="EC" id="6.2.1.5" evidence="1"/>
<dbReference type="EMBL" id="CP000237">
    <property type="protein sequence ID" value="ABD46226.1"/>
    <property type="molecule type" value="Genomic_DNA"/>
</dbReference>
<dbReference type="RefSeq" id="WP_011451651.1">
    <property type="nucleotide sequence ID" value="NC_007798.1"/>
</dbReference>
<dbReference type="SMR" id="Q2GEF1"/>
<dbReference type="STRING" id="222891.NSE_0251"/>
<dbReference type="KEGG" id="nse:NSE_0251"/>
<dbReference type="eggNOG" id="COG0045">
    <property type="taxonomic scope" value="Bacteria"/>
</dbReference>
<dbReference type="HOGENOM" id="CLU_037430_0_2_5"/>
<dbReference type="OrthoDB" id="9802602at2"/>
<dbReference type="UniPathway" id="UPA00223">
    <property type="reaction ID" value="UER00999"/>
</dbReference>
<dbReference type="Proteomes" id="UP000001942">
    <property type="component" value="Chromosome"/>
</dbReference>
<dbReference type="GO" id="GO:0005829">
    <property type="term" value="C:cytosol"/>
    <property type="evidence" value="ECO:0007669"/>
    <property type="project" value="TreeGrafter"/>
</dbReference>
<dbReference type="GO" id="GO:0042709">
    <property type="term" value="C:succinate-CoA ligase complex"/>
    <property type="evidence" value="ECO:0007669"/>
    <property type="project" value="TreeGrafter"/>
</dbReference>
<dbReference type="GO" id="GO:0005524">
    <property type="term" value="F:ATP binding"/>
    <property type="evidence" value="ECO:0007669"/>
    <property type="project" value="UniProtKB-UniRule"/>
</dbReference>
<dbReference type="GO" id="GO:0000287">
    <property type="term" value="F:magnesium ion binding"/>
    <property type="evidence" value="ECO:0007669"/>
    <property type="project" value="UniProtKB-UniRule"/>
</dbReference>
<dbReference type="GO" id="GO:0004775">
    <property type="term" value="F:succinate-CoA ligase (ADP-forming) activity"/>
    <property type="evidence" value="ECO:0007669"/>
    <property type="project" value="UniProtKB-UniRule"/>
</dbReference>
<dbReference type="GO" id="GO:0004776">
    <property type="term" value="F:succinate-CoA ligase (GDP-forming) activity"/>
    <property type="evidence" value="ECO:0007669"/>
    <property type="project" value="RHEA"/>
</dbReference>
<dbReference type="GO" id="GO:0006104">
    <property type="term" value="P:succinyl-CoA metabolic process"/>
    <property type="evidence" value="ECO:0007669"/>
    <property type="project" value="TreeGrafter"/>
</dbReference>
<dbReference type="GO" id="GO:0006099">
    <property type="term" value="P:tricarboxylic acid cycle"/>
    <property type="evidence" value="ECO:0007669"/>
    <property type="project" value="UniProtKB-UniRule"/>
</dbReference>
<dbReference type="FunFam" id="3.30.1490.20:FF:000002">
    <property type="entry name" value="Succinate--CoA ligase [ADP-forming] subunit beta"/>
    <property type="match status" value="1"/>
</dbReference>
<dbReference type="FunFam" id="3.30.470.20:FF:000002">
    <property type="entry name" value="Succinate--CoA ligase [ADP-forming] subunit beta"/>
    <property type="match status" value="1"/>
</dbReference>
<dbReference type="FunFam" id="3.40.50.261:FF:000001">
    <property type="entry name" value="Succinate--CoA ligase [ADP-forming] subunit beta"/>
    <property type="match status" value="1"/>
</dbReference>
<dbReference type="Gene3D" id="3.30.1490.20">
    <property type="entry name" value="ATP-grasp fold, A domain"/>
    <property type="match status" value="1"/>
</dbReference>
<dbReference type="Gene3D" id="3.30.470.20">
    <property type="entry name" value="ATP-grasp fold, B domain"/>
    <property type="match status" value="1"/>
</dbReference>
<dbReference type="Gene3D" id="3.40.50.261">
    <property type="entry name" value="Succinyl-CoA synthetase domains"/>
    <property type="match status" value="1"/>
</dbReference>
<dbReference type="HAMAP" id="MF_00558">
    <property type="entry name" value="Succ_CoA_beta"/>
    <property type="match status" value="1"/>
</dbReference>
<dbReference type="InterPro" id="IPR011761">
    <property type="entry name" value="ATP-grasp"/>
</dbReference>
<dbReference type="InterPro" id="IPR013650">
    <property type="entry name" value="ATP-grasp_succ-CoA_synth-type"/>
</dbReference>
<dbReference type="InterPro" id="IPR013815">
    <property type="entry name" value="ATP_grasp_subdomain_1"/>
</dbReference>
<dbReference type="InterPro" id="IPR017866">
    <property type="entry name" value="Succ-CoA_synthase_bsu_CS"/>
</dbReference>
<dbReference type="InterPro" id="IPR005811">
    <property type="entry name" value="SUCC_ACL_C"/>
</dbReference>
<dbReference type="InterPro" id="IPR005809">
    <property type="entry name" value="Succ_CoA_ligase-like_bsu"/>
</dbReference>
<dbReference type="InterPro" id="IPR016102">
    <property type="entry name" value="Succinyl-CoA_synth-like"/>
</dbReference>
<dbReference type="NCBIfam" id="NF001913">
    <property type="entry name" value="PRK00696.1"/>
    <property type="match status" value="1"/>
</dbReference>
<dbReference type="NCBIfam" id="TIGR01016">
    <property type="entry name" value="sucCoAbeta"/>
    <property type="match status" value="1"/>
</dbReference>
<dbReference type="PANTHER" id="PTHR11815:SF10">
    <property type="entry name" value="SUCCINATE--COA LIGASE [GDP-FORMING] SUBUNIT BETA, MITOCHONDRIAL"/>
    <property type="match status" value="1"/>
</dbReference>
<dbReference type="PANTHER" id="PTHR11815">
    <property type="entry name" value="SUCCINYL-COA SYNTHETASE BETA CHAIN"/>
    <property type="match status" value="1"/>
</dbReference>
<dbReference type="Pfam" id="PF08442">
    <property type="entry name" value="ATP-grasp_2"/>
    <property type="match status" value="1"/>
</dbReference>
<dbReference type="Pfam" id="PF00549">
    <property type="entry name" value="Ligase_CoA"/>
    <property type="match status" value="1"/>
</dbReference>
<dbReference type="PIRSF" id="PIRSF001554">
    <property type="entry name" value="SucCS_beta"/>
    <property type="match status" value="1"/>
</dbReference>
<dbReference type="SUPFAM" id="SSF56059">
    <property type="entry name" value="Glutathione synthetase ATP-binding domain-like"/>
    <property type="match status" value="1"/>
</dbReference>
<dbReference type="SUPFAM" id="SSF52210">
    <property type="entry name" value="Succinyl-CoA synthetase domains"/>
    <property type="match status" value="1"/>
</dbReference>
<dbReference type="PROSITE" id="PS50975">
    <property type="entry name" value="ATP_GRASP"/>
    <property type="match status" value="1"/>
</dbReference>
<dbReference type="PROSITE" id="PS01217">
    <property type="entry name" value="SUCCINYL_COA_LIG_3"/>
    <property type="match status" value="1"/>
</dbReference>
<proteinExistence type="inferred from homology"/>
<keyword id="KW-0067">ATP-binding</keyword>
<keyword id="KW-0436">Ligase</keyword>
<keyword id="KW-0460">Magnesium</keyword>
<keyword id="KW-0479">Metal-binding</keyword>
<keyword id="KW-0547">Nucleotide-binding</keyword>
<keyword id="KW-0816">Tricarboxylic acid cycle</keyword>
<name>SUCC_NEOSM</name>
<comment type="function">
    <text evidence="1">Succinyl-CoA synthetase functions in the citric acid cycle (TCA), coupling the hydrolysis of succinyl-CoA to the synthesis of either ATP or GTP and thus represents the only step of substrate-level phosphorylation in the TCA. The beta subunit provides nucleotide specificity of the enzyme and binds the substrate succinate, while the binding sites for coenzyme A and phosphate are found in the alpha subunit.</text>
</comment>
<comment type="catalytic activity">
    <reaction evidence="1">
        <text>succinate + ATP + CoA = succinyl-CoA + ADP + phosphate</text>
        <dbReference type="Rhea" id="RHEA:17661"/>
        <dbReference type="ChEBI" id="CHEBI:30031"/>
        <dbReference type="ChEBI" id="CHEBI:30616"/>
        <dbReference type="ChEBI" id="CHEBI:43474"/>
        <dbReference type="ChEBI" id="CHEBI:57287"/>
        <dbReference type="ChEBI" id="CHEBI:57292"/>
        <dbReference type="ChEBI" id="CHEBI:456216"/>
        <dbReference type="EC" id="6.2.1.5"/>
    </reaction>
    <physiologicalReaction direction="right-to-left" evidence="1">
        <dbReference type="Rhea" id="RHEA:17663"/>
    </physiologicalReaction>
</comment>
<comment type="catalytic activity">
    <reaction evidence="1">
        <text>GTP + succinate + CoA = succinyl-CoA + GDP + phosphate</text>
        <dbReference type="Rhea" id="RHEA:22120"/>
        <dbReference type="ChEBI" id="CHEBI:30031"/>
        <dbReference type="ChEBI" id="CHEBI:37565"/>
        <dbReference type="ChEBI" id="CHEBI:43474"/>
        <dbReference type="ChEBI" id="CHEBI:57287"/>
        <dbReference type="ChEBI" id="CHEBI:57292"/>
        <dbReference type="ChEBI" id="CHEBI:58189"/>
    </reaction>
    <physiologicalReaction direction="right-to-left" evidence="1">
        <dbReference type="Rhea" id="RHEA:22122"/>
    </physiologicalReaction>
</comment>
<comment type="cofactor">
    <cofactor evidence="1">
        <name>Mg(2+)</name>
        <dbReference type="ChEBI" id="CHEBI:18420"/>
    </cofactor>
    <text evidence="1">Binds 1 Mg(2+) ion per subunit.</text>
</comment>
<comment type="pathway">
    <text evidence="1">Carbohydrate metabolism; tricarboxylic acid cycle; succinate from succinyl-CoA (ligase route): step 1/1.</text>
</comment>
<comment type="subunit">
    <text evidence="1">Heterotetramer of two alpha and two beta subunits.</text>
</comment>
<comment type="similarity">
    <text evidence="1">Belongs to the succinate/malate CoA ligase beta subunit family.</text>
</comment>
<reference key="1">
    <citation type="journal article" date="2006" name="PLoS Genet.">
        <title>Comparative genomics of emerging human ehrlichiosis agents.</title>
        <authorList>
            <person name="Dunning Hotopp J.C."/>
            <person name="Lin M."/>
            <person name="Madupu R."/>
            <person name="Crabtree J."/>
            <person name="Angiuoli S.V."/>
            <person name="Eisen J.A."/>
            <person name="Seshadri R."/>
            <person name="Ren Q."/>
            <person name="Wu M."/>
            <person name="Utterback T.R."/>
            <person name="Smith S."/>
            <person name="Lewis M."/>
            <person name="Khouri H."/>
            <person name="Zhang C."/>
            <person name="Niu H."/>
            <person name="Lin Q."/>
            <person name="Ohashi N."/>
            <person name="Zhi N."/>
            <person name="Nelson W.C."/>
            <person name="Brinkac L.M."/>
            <person name="Dodson R.J."/>
            <person name="Rosovitz M.J."/>
            <person name="Sundaram J.P."/>
            <person name="Daugherty S.C."/>
            <person name="Davidsen T."/>
            <person name="Durkin A.S."/>
            <person name="Gwinn M.L."/>
            <person name="Haft D.H."/>
            <person name="Selengut J.D."/>
            <person name="Sullivan S.A."/>
            <person name="Zafar N."/>
            <person name="Zhou L."/>
            <person name="Benahmed F."/>
            <person name="Forberger H."/>
            <person name="Halpin R."/>
            <person name="Mulligan S."/>
            <person name="Robinson J."/>
            <person name="White O."/>
            <person name="Rikihisa Y."/>
            <person name="Tettelin H."/>
        </authorList>
    </citation>
    <scope>NUCLEOTIDE SEQUENCE [LARGE SCALE GENOMIC DNA]</scope>
    <source>
        <strain>ATCC VR-367 / Miyayama</strain>
    </source>
</reference>
<feature type="chain" id="PRO_1000082140" description="Succinate--CoA ligase [ADP-forming] subunit beta">
    <location>
        <begin position="1"/>
        <end position="392"/>
    </location>
</feature>
<feature type="domain" description="ATP-grasp" evidence="1">
    <location>
        <begin position="9"/>
        <end position="247"/>
    </location>
</feature>
<feature type="binding site" evidence="1">
    <location>
        <position position="49"/>
    </location>
    <ligand>
        <name>ATP</name>
        <dbReference type="ChEBI" id="CHEBI:30616"/>
    </ligand>
</feature>
<feature type="binding site" evidence="1">
    <location>
        <begin position="56"/>
        <end position="58"/>
    </location>
    <ligand>
        <name>ATP</name>
        <dbReference type="ChEBI" id="CHEBI:30616"/>
    </ligand>
</feature>
<feature type="binding site" evidence="1">
    <location>
        <position position="102"/>
    </location>
    <ligand>
        <name>ATP</name>
        <dbReference type="ChEBI" id="CHEBI:30616"/>
    </ligand>
</feature>
<feature type="binding site" evidence="1">
    <location>
        <position position="105"/>
    </location>
    <ligand>
        <name>ATP</name>
        <dbReference type="ChEBI" id="CHEBI:30616"/>
    </ligand>
</feature>
<feature type="binding site" evidence="1">
    <location>
        <position position="110"/>
    </location>
    <ligand>
        <name>ATP</name>
        <dbReference type="ChEBI" id="CHEBI:30616"/>
    </ligand>
</feature>
<feature type="binding site" evidence="1">
    <location>
        <position position="202"/>
    </location>
    <ligand>
        <name>Mg(2+)</name>
        <dbReference type="ChEBI" id="CHEBI:18420"/>
    </ligand>
</feature>
<feature type="binding site" evidence="1">
    <location>
        <position position="216"/>
    </location>
    <ligand>
        <name>Mg(2+)</name>
        <dbReference type="ChEBI" id="CHEBI:18420"/>
    </ligand>
</feature>
<feature type="binding site" evidence="1">
    <location>
        <position position="267"/>
    </location>
    <ligand>
        <name>substrate</name>
        <note>ligand shared with subunit alpha</note>
    </ligand>
</feature>
<feature type="binding site" evidence="1">
    <location>
        <begin position="324"/>
        <end position="326"/>
    </location>
    <ligand>
        <name>substrate</name>
        <note>ligand shared with subunit alpha</note>
    </ligand>
</feature>
<gene>
    <name evidence="1" type="primary">sucC</name>
    <name type="ordered locus">NSE_0251</name>
</gene>
<protein>
    <recommendedName>
        <fullName evidence="1">Succinate--CoA ligase [ADP-forming] subunit beta</fullName>
        <ecNumber evidence="1">6.2.1.5</ecNumber>
    </recommendedName>
    <alternativeName>
        <fullName evidence="1">Succinyl-CoA synthetase subunit beta</fullName>
        <shortName evidence="1">SCS-beta</shortName>
    </alternativeName>
</protein>
<sequence>MNIHEYQAKEILRVCGVPTPAGFLVQEDTETSEIAKSLARLGGKVFAVKAQIHAGGRGKAGGVVICRSVEEAIDNTKKMLGMNLVTHQTSPAGQKVRKVYIEAGQSILKEYYLSMVVDRENAKVAIIASEEGGMDIEEIARSTPEKIKKVFVDLSIGISDFHARKIGFELGLSLAQIKQFTPLVKKLYALFVTRDASQVEINPLIANSKGEFIALDAKLNFDDNALYRHPDTLELRDLYEEDPKEIEAAKYNLNYIKMEGGIGCMVNGAGLAMATMDIIKYYGASPANFLDVGGGANLEQVTNAFKIISSDKHVAGILVNIFGGIMRCDIIAEGIVAAAKDIGLTMPLVVRLSGTNYSAGIKIIEGSGLNIVTASELDDAAQKIVKLTRKEI</sequence>
<organism>
    <name type="scientific">Neorickettsia sennetsu (strain ATCC VR-367 / Miyayama)</name>
    <name type="common">Ehrlichia sennetsu</name>
    <dbReference type="NCBI Taxonomy" id="222891"/>
    <lineage>
        <taxon>Bacteria</taxon>
        <taxon>Pseudomonadati</taxon>
        <taxon>Pseudomonadota</taxon>
        <taxon>Alphaproteobacteria</taxon>
        <taxon>Rickettsiales</taxon>
        <taxon>Anaplasmataceae</taxon>
        <taxon>Neorickettsia</taxon>
    </lineage>
</organism>
<accession>Q2GEF1</accession>